<feature type="chain" id="PRO_0000193309" description="Ubiquinone/menaquinone biosynthesis C-methyltransferase UbiE">
    <location>
        <begin position="1"/>
        <end position="256"/>
    </location>
</feature>
<feature type="binding site" evidence="1">
    <location>
        <position position="79"/>
    </location>
    <ligand>
        <name>S-adenosyl-L-methionine</name>
        <dbReference type="ChEBI" id="CHEBI:59789"/>
    </ligand>
</feature>
<feature type="binding site" evidence="1">
    <location>
        <position position="100"/>
    </location>
    <ligand>
        <name>S-adenosyl-L-methionine</name>
        <dbReference type="ChEBI" id="CHEBI:59789"/>
    </ligand>
</feature>
<feature type="binding site" evidence="1">
    <location>
        <begin position="128"/>
        <end position="129"/>
    </location>
    <ligand>
        <name>S-adenosyl-L-methionine</name>
        <dbReference type="ChEBI" id="CHEBI:59789"/>
    </ligand>
</feature>
<sequence>MNDPRKGADAEPTTHFGYQNVPESQKAKKVAEVFHSVAAKYDLMNDLMSGGIHRLWKRFTIELSGVRSGNRVLDIAGGTGDLTRQFSRLVGPTGEVVLADINASMLKVGRDKLLDKGVSGNVSFVQADAEKLPFPDNHFDCVTIAFGLRNVTHKDEAIRSMLRVLKPGGRLLVLEFSKPSSNLLSKAYDAYSFSLLPLMGKLVTNDSESYRYLAESIRMHPDQETLKAMMVEAGFDRVTYHNMTGGIVALHRGIKP</sequence>
<name>UBIE_PSEAE</name>
<proteinExistence type="inferred from homology"/>
<dbReference type="EC" id="2.1.1.163" evidence="1"/>
<dbReference type="EC" id="2.1.1.201" evidence="1"/>
<dbReference type="EMBL" id="AE004091">
    <property type="protein sequence ID" value="AAG08448.1"/>
    <property type="molecule type" value="Genomic_DNA"/>
</dbReference>
<dbReference type="PIR" id="B83014">
    <property type="entry name" value="B83014"/>
</dbReference>
<dbReference type="RefSeq" id="NP_253750.1">
    <property type="nucleotide sequence ID" value="NC_002516.2"/>
</dbReference>
<dbReference type="RefSeq" id="WP_003103462.1">
    <property type="nucleotide sequence ID" value="NZ_QZGE01000002.1"/>
</dbReference>
<dbReference type="SMR" id="Q9HUC0"/>
<dbReference type="FunCoup" id="Q9HUC0">
    <property type="interactions" value="620"/>
</dbReference>
<dbReference type="STRING" id="208964.PA5063"/>
<dbReference type="PaxDb" id="208964-PA5063"/>
<dbReference type="GeneID" id="879743"/>
<dbReference type="KEGG" id="pae:PA5063"/>
<dbReference type="PATRIC" id="fig|208964.12.peg.5307"/>
<dbReference type="PseudoCAP" id="PA5063"/>
<dbReference type="HOGENOM" id="CLU_037990_0_0_6"/>
<dbReference type="InParanoid" id="Q9HUC0"/>
<dbReference type="OrthoDB" id="9808140at2"/>
<dbReference type="PhylomeDB" id="Q9HUC0"/>
<dbReference type="BioCyc" id="PAER208964:G1FZ6-5179-MONOMER"/>
<dbReference type="UniPathway" id="UPA00079">
    <property type="reaction ID" value="UER00169"/>
</dbReference>
<dbReference type="UniPathway" id="UPA00232"/>
<dbReference type="Proteomes" id="UP000002438">
    <property type="component" value="Chromosome"/>
</dbReference>
<dbReference type="GO" id="GO:0008425">
    <property type="term" value="F:2-methoxy-6-polyprenyl-1,4-benzoquinol methyltransferase activity"/>
    <property type="evidence" value="ECO:0000318"/>
    <property type="project" value="GO_Central"/>
</dbReference>
<dbReference type="GO" id="GO:0043770">
    <property type="term" value="F:demethylmenaquinone methyltransferase activity"/>
    <property type="evidence" value="ECO:0007669"/>
    <property type="project" value="UniProtKB-UniRule"/>
</dbReference>
<dbReference type="GO" id="GO:0009060">
    <property type="term" value="P:aerobic respiration"/>
    <property type="evidence" value="ECO:0007669"/>
    <property type="project" value="UniProtKB-UniRule"/>
</dbReference>
<dbReference type="GO" id="GO:0009234">
    <property type="term" value="P:menaquinone biosynthetic process"/>
    <property type="evidence" value="ECO:0007669"/>
    <property type="project" value="UniProtKB-UniRule"/>
</dbReference>
<dbReference type="GO" id="GO:0032259">
    <property type="term" value="P:methylation"/>
    <property type="evidence" value="ECO:0007669"/>
    <property type="project" value="UniProtKB-KW"/>
</dbReference>
<dbReference type="GO" id="GO:0006744">
    <property type="term" value="P:ubiquinone biosynthetic process"/>
    <property type="evidence" value="ECO:0000318"/>
    <property type="project" value="GO_Central"/>
</dbReference>
<dbReference type="CDD" id="cd02440">
    <property type="entry name" value="AdoMet_MTases"/>
    <property type="match status" value="1"/>
</dbReference>
<dbReference type="FunFam" id="3.40.50.150:FF:000014">
    <property type="entry name" value="Ubiquinone/menaquinone biosynthesis C-methyltransferase UbiE"/>
    <property type="match status" value="1"/>
</dbReference>
<dbReference type="Gene3D" id="3.40.50.150">
    <property type="entry name" value="Vaccinia Virus protein VP39"/>
    <property type="match status" value="1"/>
</dbReference>
<dbReference type="HAMAP" id="MF_01813">
    <property type="entry name" value="MenG_UbiE_methyltr"/>
    <property type="match status" value="1"/>
</dbReference>
<dbReference type="InterPro" id="IPR029063">
    <property type="entry name" value="SAM-dependent_MTases_sf"/>
</dbReference>
<dbReference type="InterPro" id="IPR004033">
    <property type="entry name" value="UbiE/COQ5_MeTrFase"/>
</dbReference>
<dbReference type="InterPro" id="IPR023576">
    <property type="entry name" value="UbiE/COQ5_MeTrFase_CS"/>
</dbReference>
<dbReference type="NCBIfam" id="TIGR01934">
    <property type="entry name" value="MenG_MenH_UbiE"/>
    <property type="match status" value="1"/>
</dbReference>
<dbReference type="NCBIfam" id="NF001240">
    <property type="entry name" value="PRK00216.1-1"/>
    <property type="match status" value="1"/>
</dbReference>
<dbReference type="NCBIfam" id="NF001244">
    <property type="entry name" value="PRK00216.1-5"/>
    <property type="match status" value="1"/>
</dbReference>
<dbReference type="PANTHER" id="PTHR43591:SF24">
    <property type="entry name" value="2-METHOXY-6-POLYPRENYL-1,4-BENZOQUINOL METHYLASE, MITOCHONDRIAL"/>
    <property type="match status" value="1"/>
</dbReference>
<dbReference type="PANTHER" id="PTHR43591">
    <property type="entry name" value="METHYLTRANSFERASE"/>
    <property type="match status" value="1"/>
</dbReference>
<dbReference type="Pfam" id="PF01209">
    <property type="entry name" value="Ubie_methyltran"/>
    <property type="match status" value="1"/>
</dbReference>
<dbReference type="SUPFAM" id="SSF53335">
    <property type="entry name" value="S-adenosyl-L-methionine-dependent methyltransferases"/>
    <property type="match status" value="1"/>
</dbReference>
<dbReference type="PROSITE" id="PS51608">
    <property type="entry name" value="SAM_MT_UBIE"/>
    <property type="match status" value="1"/>
</dbReference>
<dbReference type="PROSITE" id="PS01183">
    <property type="entry name" value="UBIE_1"/>
    <property type="match status" value="1"/>
</dbReference>
<dbReference type="PROSITE" id="PS01184">
    <property type="entry name" value="UBIE_2"/>
    <property type="match status" value="1"/>
</dbReference>
<organism>
    <name type="scientific">Pseudomonas aeruginosa (strain ATCC 15692 / DSM 22644 / CIP 104116 / JCM 14847 / LMG 12228 / 1C / PRS 101 / PAO1)</name>
    <dbReference type="NCBI Taxonomy" id="208964"/>
    <lineage>
        <taxon>Bacteria</taxon>
        <taxon>Pseudomonadati</taxon>
        <taxon>Pseudomonadota</taxon>
        <taxon>Gammaproteobacteria</taxon>
        <taxon>Pseudomonadales</taxon>
        <taxon>Pseudomonadaceae</taxon>
        <taxon>Pseudomonas</taxon>
    </lineage>
</organism>
<gene>
    <name evidence="1" type="primary">ubiE</name>
    <name type="ordered locus">PA5063</name>
</gene>
<evidence type="ECO:0000255" key="1">
    <source>
        <dbReference type="HAMAP-Rule" id="MF_01813"/>
    </source>
</evidence>
<comment type="function">
    <text evidence="1">Methyltransferase required for the conversion of demethylmenaquinol (DMKH2) to menaquinol (MKH2) and the conversion of 2-polyprenyl-6-methoxy-1,4-benzoquinol (DDMQH2) to 2-polyprenyl-3-methyl-6-methoxy-1,4-benzoquinol (DMQH2).</text>
</comment>
<comment type="catalytic activity">
    <reaction evidence="1">
        <text>a 2-demethylmenaquinol + S-adenosyl-L-methionine = a menaquinol + S-adenosyl-L-homocysteine + H(+)</text>
        <dbReference type="Rhea" id="RHEA:42640"/>
        <dbReference type="Rhea" id="RHEA-COMP:9539"/>
        <dbReference type="Rhea" id="RHEA-COMP:9563"/>
        <dbReference type="ChEBI" id="CHEBI:15378"/>
        <dbReference type="ChEBI" id="CHEBI:18151"/>
        <dbReference type="ChEBI" id="CHEBI:55437"/>
        <dbReference type="ChEBI" id="CHEBI:57856"/>
        <dbReference type="ChEBI" id="CHEBI:59789"/>
        <dbReference type="EC" id="2.1.1.163"/>
    </reaction>
</comment>
<comment type="catalytic activity">
    <reaction evidence="1">
        <text>a 2-methoxy-6-(all-trans-polyprenyl)benzene-1,4-diol + S-adenosyl-L-methionine = a 5-methoxy-2-methyl-3-(all-trans-polyprenyl)benzene-1,4-diol + S-adenosyl-L-homocysteine + H(+)</text>
        <dbReference type="Rhea" id="RHEA:28286"/>
        <dbReference type="Rhea" id="RHEA-COMP:10858"/>
        <dbReference type="Rhea" id="RHEA-COMP:10859"/>
        <dbReference type="ChEBI" id="CHEBI:15378"/>
        <dbReference type="ChEBI" id="CHEBI:57856"/>
        <dbReference type="ChEBI" id="CHEBI:59789"/>
        <dbReference type="ChEBI" id="CHEBI:84166"/>
        <dbReference type="ChEBI" id="CHEBI:84167"/>
        <dbReference type="EC" id="2.1.1.201"/>
    </reaction>
</comment>
<comment type="pathway">
    <text evidence="1">Quinol/quinone metabolism; menaquinone biosynthesis; menaquinol from 1,4-dihydroxy-2-naphthoate: step 2/2.</text>
</comment>
<comment type="pathway">
    <text evidence="1">Cofactor biosynthesis; ubiquinone biosynthesis.</text>
</comment>
<comment type="similarity">
    <text evidence="1">Belongs to the class I-like SAM-binding methyltransferase superfamily. MenG/UbiE family.</text>
</comment>
<keyword id="KW-0474">Menaquinone biosynthesis</keyword>
<keyword id="KW-0489">Methyltransferase</keyword>
<keyword id="KW-1185">Reference proteome</keyword>
<keyword id="KW-0949">S-adenosyl-L-methionine</keyword>
<keyword id="KW-0808">Transferase</keyword>
<keyword id="KW-0831">Ubiquinone biosynthesis</keyword>
<accession>Q9HUC0</accession>
<reference key="1">
    <citation type="journal article" date="2000" name="Nature">
        <title>Complete genome sequence of Pseudomonas aeruginosa PAO1, an opportunistic pathogen.</title>
        <authorList>
            <person name="Stover C.K."/>
            <person name="Pham X.-Q.T."/>
            <person name="Erwin A.L."/>
            <person name="Mizoguchi S.D."/>
            <person name="Warrener P."/>
            <person name="Hickey M.J."/>
            <person name="Brinkman F.S.L."/>
            <person name="Hufnagle W.O."/>
            <person name="Kowalik D.J."/>
            <person name="Lagrou M."/>
            <person name="Garber R.L."/>
            <person name="Goltry L."/>
            <person name="Tolentino E."/>
            <person name="Westbrock-Wadman S."/>
            <person name="Yuan Y."/>
            <person name="Brody L.L."/>
            <person name="Coulter S.N."/>
            <person name="Folger K.R."/>
            <person name="Kas A."/>
            <person name="Larbig K."/>
            <person name="Lim R.M."/>
            <person name="Smith K.A."/>
            <person name="Spencer D.H."/>
            <person name="Wong G.K.-S."/>
            <person name="Wu Z."/>
            <person name="Paulsen I.T."/>
            <person name="Reizer J."/>
            <person name="Saier M.H. Jr."/>
            <person name="Hancock R.E.W."/>
            <person name="Lory S."/>
            <person name="Olson M.V."/>
        </authorList>
    </citation>
    <scope>NUCLEOTIDE SEQUENCE [LARGE SCALE GENOMIC DNA]</scope>
    <source>
        <strain>ATCC 15692 / DSM 22644 / CIP 104116 / JCM 14847 / LMG 12228 / 1C / PRS 101 / PAO1</strain>
    </source>
</reference>
<protein>
    <recommendedName>
        <fullName evidence="1">Ubiquinone/menaquinone biosynthesis C-methyltransferase UbiE</fullName>
        <ecNumber evidence="1">2.1.1.163</ecNumber>
        <ecNumber evidence="1">2.1.1.201</ecNumber>
    </recommendedName>
    <alternativeName>
        <fullName evidence="1">2-methoxy-6-polyprenyl-1,4-benzoquinol methylase</fullName>
    </alternativeName>
    <alternativeName>
        <fullName evidence="1">Demethylmenaquinone methyltransferase</fullName>
    </alternativeName>
</protein>